<accession>A8EXZ6</accession>
<name>MURC_RICCK</name>
<protein>
    <recommendedName>
        <fullName evidence="1">UDP-N-acetylmuramate--L-alanine ligase</fullName>
        <ecNumber evidence="1">6.3.2.8</ecNumber>
    </recommendedName>
    <alternativeName>
        <fullName evidence="1">UDP-N-acetylmuramoyl-L-alanine synthetase</fullName>
    </alternativeName>
</protein>
<feature type="chain" id="PRO_1000004398" description="UDP-N-acetylmuramate--L-alanine ligase">
    <location>
        <begin position="1"/>
        <end position="477"/>
    </location>
</feature>
<feature type="binding site" evidence="1">
    <location>
        <begin position="120"/>
        <end position="126"/>
    </location>
    <ligand>
        <name>ATP</name>
        <dbReference type="ChEBI" id="CHEBI:30616"/>
    </ligand>
</feature>
<keyword id="KW-0067">ATP-binding</keyword>
<keyword id="KW-0131">Cell cycle</keyword>
<keyword id="KW-0132">Cell division</keyword>
<keyword id="KW-0133">Cell shape</keyword>
<keyword id="KW-0961">Cell wall biogenesis/degradation</keyword>
<keyword id="KW-0963">Cytoplasm</keyword>
<keyword id="KW-0436">Ligase</keyword>
<keyword id="KW-0547">Nucleotide-binding</keyword>
<keyword id="KW-0573">Peptidoglycan synthesis</keyword>
<sequence>MLLLELKKINQTLETIHFIGIGGVGMSGIAEILHNLGYKVQGSDLVENYNTKRLESYGIKIFLGHVPQNITNVSYVVISSAINPDNPEIQEALERKIPIIRRAEMLAELMRLKCSVAVSGSHGKTTTTSLVACLFEAAGLCPTVINGGIINNRSTNAYLGSSNYLIAEADESDATFIHIPSTIAIITNIDPEHLDYYKDFATLISAFRSFIINLPFYGFAVCCIDHKIVRKLVDDITERKIVTYGIDSADAHIIAFNINTDIASSTFDVKISLPNVLGTTIIEKITIPIPGRHNILNSLAAIAVGIELDFGIKAIKNGFNNFKGVKRRFTKVAEYNMASIIDDYAHHPEEIKATLATAKNIANKQNGKVIAIFQPHRYSRMQHLFDDFMLCFADADILYITDIYAAGENPIEGITGQSLVDKITKNKYHDQANFLATLDDAVGVIIDNAVSGDVIIMMGAGNISSFANELPKKFGNL</sequence>
<gene>
    <name evidence="1" type="primary">murC</name>
    <name type="ordered locus">A1E_01420</name>
</gene>
<evidence type="ECO:0000255" key="1">
    <source>
        <dbReference type="HAMAP-Rule" id="MF_00046"/>
    </source>
</evidence>
<dbReference type="EC" id="6.3.2.8" evidence="1"/>
<dbReference type="EMBL" id="CP000409">
    <property type="protein sequence ID" value="ABV73229.1"/>
    <property type="molecule type" value="Genomic_DNA"/>
</dbReference>
<dbReference type="RefSeq" id="WP_012148428.1">
    <property type="nucleotide sequence ID" value="NC_009879.1"/>
</dbReference>
<dbReference type="SMR" id="A8EXZ6"/>
<dbReference type="STRING" id="293613.A1E_01420"/>
<dbReference type="KEGG" id="rcm:A1E_01420"/>
<dbReference type="eggNOG" id="COG0773">
    <property type="taxonomic scope" value="Bacteria"/>
</dbReference>
<dbReference type="HOGENOM" id="CLU_028104_2_2_5"/>
<dbReference type="UniPathway" id="UPA00219"/>
<dbReference type="Proteomes" id="UP000007056">
    <property type="component" value="Chromosome"/>
</dbReference>
<dbReference type="GO" id="GO:0005737">
    <property type="term" value="C:cytoplasm"/>
    <property type="evidence" value="ECO:0007669"/>
    <property type="project" value="UniProtKB-SubCell"/>
</dbReference>
<dbReference type="GO" id="GO:0005524">
    <property type="term" value="F:ATP binding"/>
    <property type="evidence" value="ECO:0007669"/>
    <property type="project" value="UniProtKB-UniRule"/>
</dbReference>
<dbReference type="GO" id="GO:0008763">
    <property type="term" value="F:UDP-N-acetylmuramate-L-alanine ligase activity"/>
    <property type="evidence" value="ECO:0007669"/>
    <property type="project" value="UniProtKB-UniRule"/>
</dbReference>
<dbReference type="GO" id="GO:0051301">
    <property type="term" value="P:cell division"/>
    <property type="evidence" value="ECO:0007669"/>
    <property type="project" value="UniProtKB-KW"/>
</dbReference>
<dbReference type="GO" id="GO:0071555">
    <property type="term" value="P:cell wall organization"/>
    <property type="evidence" value="ECO:0007669"/>
    <property type="project" value="UniProtKB-KW"/>
</dbReference>
<dbReference type="GO" id="GO:0009252">
    <property type="term" value="P:peptidoglycan biosynthetic process"/>
    <property type="evidence" value="ECO:0007669"/>
    <property type="project" value="UniProtKB-UniRule"/>
</dbReference>
<dbReference type="GO" id="GO:0008360">
    <property type="term" value="P:regulation of cell shape"/>
    <property type="evidence" value="ECO:0007669"/>
    <property type="project" value="UniProtKB-KW"/>
</dbReference>
<dbReference type="Gene3D" id="3.90.190.20">
    <property type="entry name" value="Mur ligase, C-terminal domain"/>
    <property type="match status" value="1"/>
</dbReference>
<dbReference type="Gene3D" id="3.40.1190.10">
    <property type="entry name" value="Mur-like, catalytic domain"/>
    <property type="match status" value="1"/>
</dbReference>
<dbReference type="Gene3D" id="3.40.50.720">
    <property type="entry name" value="NAD(P)-binding Rossmann-like Domain"/>
    <property type="match status" value="1"/>
</dbReference>
<dbReference type="HAMAP" id="MF_00046">
    <property type="entry name" value="MurC"/>
    <property type="match status" value="1"/>
</dbReference>
<dbReference type="InterPro" id="IPR036565">
    <property type="entry name" value="Mur-like_cat_sf"/>
</dbReference>
<dbReference type="InterPro" id="IPR004101">
    <property type="entry name" value="Mur_ligase_C"/>
</dbReference>
<dbReference type="InterPro" id="IPR036615">
    <property type="entry name" value="Mur_ligase_C_dom_sf"/>
</dbReference>
<dbReference type="InterPro" id="IPR013221">
    <property type="entry name" value="Mur_ligase_cen"/>
</dbReference>
<dbReference type="InterPro" id="IPR000713">
    <property type="entry name" value="Mur_ligase_N"/>
</dbReference>
<dbReference type="InterPro" id="IPR050061">
    <property type="entry name" value="MurCDEF_pg_biosynth"/>
</dbReference>
<dbReference type="InterPro" id="IPR005758">
    <property type="entry name" value="UDP-N-AcMur_Ala_ligase_MurC"/>
</dbReference>
<dbReference type="NCBIfam" id="TIGR01082">
    <property type="entry name" value="murC"/>
    <property type="match status" value="1"/>
</dbReference>
<dbReference type="PANTHER" id="PTHR43445:SF3">
    <property type="entry name" value="UDP-N-ACETYLMURAMATE--L-ALANINE LIGASE"/>
    <property type="match status" value="1"/>
</dbReference>
<dbReference type="PANTHER" id="PTHR43445">
    <property type="entry name" value="UDP-N-ACETYLMURAMATE--L-ALANINE LIGASE-RELATED"/>
    <property type="match status" value="1"/>
</dbReference>
<dbReference type="Pfam" id="PF01225">
    <property type="entry name" value="Mur_ligase"/>
    <property type="match status" value="1"/>
</dbReference>
<dbReference type="Pfam" id="PF02875">
    <property type="entry name" value="Mur_ligase_C"/>
    <property type="match status" value="1"/>
</dbReference>
<dbReference type="Pfam" id="PF08245">
    <property type="entry name" value="Mur_ligase_M"/>
    <property type="match status" value="1"/>
</dbReference>
<dbReference type="SUPFAM" id="SSF51984">
    <property type="entry name" value="MurCD N-terminal domain"/>
    <property type="match status" value="1"/>
</dbReference>
<dbReference type="SUPFAM" id="SSF53623">
    <property type="entry name" value="MurD-like peptide ligases, catalytic domain"/>
    <property type="match status" value="1"/>
</dbReference>
<dbReference type="SUPFAM" id="SSF53244">
    <property type="entry name" value="MurD-like peptide ligases, peptide-binding domain"/>
    <property type="match status" value="1"/>
</dbReference>
<reference key="1">
    <citation type="submission" date="2007-09" db="EMBL/GenBank/DDBJ databases">
        <title>Complete genome sequence of Rickettsia canadensis.</title>
        <authorList>
            <person name="Madan A."/>
            <person name="Fahey J."/>
            <person name="Helton E."/>
            <person name="Ketteman M."/>
            <person name="Madan A."/>
            <person name="Rodrigues S."/>
            <person name="Sanchez A."/>
            <person name="Whiting M."/>
            <person name="Dasch G."/>
            <person name="Eremeeva M."/>
        </authorList>
    </citation>
    <scope>NUCLEOTIDE SEQUENCE [LARGE SCALE GENOMIC DNA]</scope>
    <source>
        <strain>McKiel</strain>
    </source>
</reference>
<organism>
    <name type="scientific">Rickettsia canadensis (strain McKiel)</name>
    <dbReference type="NCBI Taxonomy" id="293613"/>
    <lineage>
        <taxon>Bacteria</taxon>
        <taxon>Pseudomonadati</taxon>
        <taxon>Pseudomonadota</taxon>
        <taxon>Alphaproteobacteria</taxon>
        <taxon>Rickettsiales</taxon>
        <taxon>Rickettsiaceae</taxon>
        <taxon>Rickettsieae</taxon>
        <taxon>Rickettsia</taxon>
        <taxon>belli group</taxon>
    </lineage>
</organism>
<proteinExistence type="inferred from homology"/>
<comment type="function">
    <text evidence="1">Cell wall formation.</text>
</comment>
<comment type="catalytic activity">
    <reaction evidence="1">
        <text>UDP-N-acetyl-alpha-D-muramate + L-alanine + ATP = UDP-N-acetyl-alpha-D-muramoyl-L-alanine + ADP + phosphate + H(+)</text>
        <dbReference type="Rhea" id="RHEA:23372"/>
        <dbReference type="ChEBI" id="CHEBI:15378"/>
        <dbReference type="ChEBI" id="CHEBI:30616"/>
        <dbReference type="ChEBI" id="CHEBI:43474"/>
        <dbReference type="ChEBI" id="CHEBI:57972"/>
        <dbReference type="ChEBI" id="CHEBI:70757"/>
        <dbReference type="ChEBI" id="CHEBI:83898"/>
        <dbReference type="ChEBI" id="CHEBI:456216"/>
        <dbReference type="EC" id="6.3.2.8"/>
    </reaction>
</comment>
<comment type="pathway">
    <text evidence="1">Cell wall biogenesis; peptidoglycan biosynthesis.</text>
</comment>
<comment type="subcellular location">
    <subcellularLocation>
        <location evidence="1">Cytoplasm</location>
    </subcellularLocation>
</comment>
<comment type="similarity">
    <text evidence="1">Belongs to the MurCDEF family.</text>
</comment>